<name>TSF_ARATH</name>
<protein>
    <recommendedName>
        <fullName>Protein TWIN SISTER of FT</fullName>
    </recommendedName>
    <alternativeName>
        <fullName>TFL1-like protein</fullName>
    </alternativeName>
</protein>
<evidence type="ECO:0000250" key="1"/>
<evidence type="ECO:0000305" key="2"/>
<organism>
    <name type="scientific">Arabidopsis thaliana</name>
    <name type="common">Mouse-ear cress</name>
    <dbReference type="NCBI Taxonomy" id="3702"/>
    <lineage>
        <taxon>Eukaryota</taxon>
        <taxon>Viridiplantae</taxon>
        <taxon>Streptophyta</taxon>
        <taxon>Embryophyta</taxon>
        <taxon>Tracheophyta</taxon>
        <taxon>Spermatophyta</taxon>
        <taxon>Magnoliopsida</taxon>
        <taxon>eudicotyledons</taxon>
        <taxon>Gunneridae</taxon>
        <taxon>Pentapetalae</taxon>
        <taxon>rosids</taxon>
        <taxon>malvids</taxon>
        <taxon>Brassicales</taxon>
        <taxon>Brassicaceae</taxon>
        <taxon>Camelineae</taxon>
        <taxon>Arabidopsis</taxon>
    </lineage>
</organism>
<feature type="chain" id="PRO_0000204763" description="Protein TWIN SISTER of FT">
    <location>
        <begin position="1"/>
        <end position="175"/>
    </location>
</feature>
<keyword id="KW-0963">Cytoplasm</keyword>
<keyword id="KW-1185">Reference proteome</keyword>
<sequence>MSLSRRDPLVVGSVVGDVLDPFTRLVSLKVTYGHREVTNGLDLRPSQVLNKPIVEIGGDDFRNFYTLVMVDPDVPSPSNPHQREYLHWLVTDIPATTGNAFGNEVVCYESPRPPSGIHRIVLVLFRQLGRQTVYAPGWRQQFNTREFAEIYNLGLPVAASYFNCQRENGCGGRRT</sequence>
<accession>Q9S7R5</accession>
<comment type="function">
    <text evidence="1">May form complexes with phosphorylated ligands by interfering with kinases and their effectors.</text>
</comment>
<comment type="subcellular location">
    <subcellularLocation>
        <location evidence="1">Cytoplasm</location>
    </subcellularLocation>
</comment>
<comment type="similarity">
    <text evidence="2">Belongs to the phosphatidylethanolamine-binding protein family.</text>
</comment>
<proteinExistence type="evidence at transcript level"/>
<reference key="1">
    <citation type="journal article" date="1999" name="Science">
        <title>A pair of related genes with antagonistic roles in mediating flowering signals.</title>
        <authorList>
            <person name="Kobayashi Y."/>
            <person name="Kaya H."/>
            <person name="Goto K."/>
            <person name="Iwabuchi M."/>
            <person name="Araki T."/>
        </authorList>
    </citation>
    <scope>NUCLEOTIDE SEQUENCE [MRNA]</scope>
    <source>
        <strain>cv. Columbia</strain>
    </source>
</reference>
<reference key="2">
    <citation type="journal article" date="1999" name="Science">
        <title>Activation tagging of the floral inducer FT.</title>
        <authorList>
            <person name="Kardailsky I."/>
            <person name="Shukla V.K."/>
            <person name="Ahn J.H."/>
            <person name="Dagenais N."/>
            <person name="Christensen S.K."/>
            <person name="Nguyen J.T."/>
            <person name="Chory J."/>
            <person name="Harrison M.J."/>
            <person name="Weigel D."/>
        </authorList>
    </citation>
    <scope>NUCLEOTIDE SEQUENCE [MRNA]</scope>
    <source>
        <strain>cv. Columbia</strain>
    </source>
</reference>
<reference key="3">
    <citation type="journal article" date="1999" name="Nature">
        <title>Sequence and analysis of chromosome 4 of the plant Arabidopsis thaliana.</title>
        <authorList>
            <person name="Mayer K.F.X."/>
            <person name="Schueller C."/>
            <person name="Wambutt R."/>
            <person name="Murphy G."/>
            <person name="Volckaert G."/>
            <person name="Pohl T."/>
            <person name="Duesterhoeft A."/>
            <person name="Stiekema W."/>
            <person name="Entian K.-D."/>
            <person name="Terryn N."/>
            <person name="Harris B."/>
            <person name="Ansorge W."/>
            <person name="Brandt P."/>
            <person name="Grivell L.A."/>
            <person name="Rieger M."/>
            <person name="Weichselgartner M."/>
            <person name="de Simone V."/>
            <person name="Obermaier B."/>
            <person name="Mache R."/>
            <person name="Mueller M."/>
            <person name="Kreis M."/>
            <person name="Delseny M."/>
            <person name="Puigdomenech P."/>
            <person name="Watson M."/>
            <person name="Schmidtheini T."/>
            <person name="Reichert B."/>
            <person name="Portetelle D."/>
            <person name="Perez-Alonso M."/>
            <person name="Boutry M."/>
            <person name="Bancroft I."/>
            <person name="Vos P."/>
            <person name="Hoheisel J."/>
            <person name="Zimmermann W."/>
            <person name="Wedler H."/>
            <person name="Ridley P."/>
            <person name="Langham S.-A."/>
            <person name="McCullagh B."/>
            <person name="Bilham L."/>
            <person name="Robben J."/>
            <person name="van der Schueren J."/>
            <person name="Grymonprez B."/>
            <person name="Chuang Y.-J."/>
            <person name="Vandenbussche F."/>
            <person name="Braeken M."/>
            <person name="Weltjens I."/>
            <person name="Voet M."/>
            <person name="Bastiaens I."/>
            <person name="Aert R."/>
            <person name="Defoor E."/>
            <person name="Weitzenegger T."/>
            <person name="Bothe G."/>
            <person name="Ramsperger U."/>
            <person name="Hilbert H."/>
            <person name="Braun M."/>
            <person name="Holzer E."/>
            <person name="Brandt A."/>
            <person name="Peters S."/>
            <person name="van Staveren M."/>
            <person name="Dirkse W."/>
            <person name="Mooijman P."/>
            <person name="Klein Lankhorst R."/>
            <person name="Rose M."/>
            <person name="Hauf J."/>
            <person name="Koetter P."/>
            <person name="Berneiser S."/>
            <person name="Hempel S."/>
            <person name="Feldpausch M."/>
            <person name="Lamberth S."/>
            <person name="Van den Daele H."/>
            <person name="De Keyser A."/>
            <person name="Buysshaert C."/>
            <person name="Gielen J."/>
            <person name="Villarroel R."/>
            <person name="De Clercq R."/>
            <person name="van Montagu M."/>
            <person name="Rogers J."/>
            <person name="Cronin A."/>
            <person name="Quail M.A."/>
            <person name="Bray-Allen S."/>
            <person name="Clark L."/>
            <person name="Doggett J."/>
            <person name="Hall S."/>
            <person name="Kay M."/>
            <person name="Lennard N."/>
            <person name="McLay K."/>
            <person name="Mayes R."/>
            <person name="Pettett A."/>
            <person name="Rajandream M.A."/>
            <person name="Lyne M."/>
            <person name="Benes V."/>
            <person name="Rechmann S."/>
            <person name="Borkova D."/>
            <person name="Bloecker H."/>
            <person name="Scharfe M."/>
            <person name="Grimm M."/>
            <person name="Loehnert T.-H."/>
            <person name="Dose S."/>
            <person name="de Haan M."/>
            <person name="Maarse A.C."/>
            <person name="Schaefer M."/>
            <person name="Mueller-Auer S."/>
            <person name="Gabel C."/>
            <person name="Fuchs M."/>
            <person name="Fartmann B."/>
            <person name="Granderath K."/>
            <person name="Dauner D."/>
            <person name="Herzl A."/>
            <person name="Neumann S."/>
            <person name="Argiriou A."/>
            <person name="Vitale D."/>
            <person name="Liguori R."/>
            <person name="Piravandi E."/>
            <person name="Massenet O."/>
            <person name="Quigley F."/>
            <person name="Clabauld G."/>
            <person name="Muendlein A."/>
            <person name="Felber R."/>
            <person name="Schnabl S."/>
            <person name="Hiller R."/>
            <person name="Schmidt W."/>
            <person name="Lecharny A."/>
            <person name="Aubourg S."/>
            <person name="Chefdor F."/>
            <person name="Cooke R."/>
            <person name="Berger C."/>
            <person name="Monfort A."/>
            <person name="Casacuberta E."/>
            <person name="Gibbons T."/>
            <person name="Weber N."/>
            <person name="Vandenbol M."/>
            <person name="Bargues M."/>
            <person name="Terol J."/>
            <person name="Torres A."/>
            <person name="Perez-Perez A."/>
            <person name="Purnelle B."/>
            <person name="Bent E."/>
            <person name="Johnson S."/>
            <person name="Tacon D."/>
            <person name="Jesse T."/>
            <person name="Heijnen L."/>
            <person name="Schwarz S."/>
            <person name="Scholler P."/>
            <person name="Heber S."/>
            <person name="Francs P."/>
            <person name="Bielke C."/>
            <person name="Frishman D."/>
            <person name="Haase D."/>
            <person name="Lemcke K."/>
            <person name="Mewes H.-W."/>
            <person name="Stocker S."/>
            <person name="Zaccaria P."/>
            <person name="Bevan M."/>
            <person name="Wilson R.K."/>
            <person name="de la Bastide M."/>
            <person name="Habermann K."/>
            <person name="Parnell L."/>
            <person name="Dedhia N."/>
            <person name="Gnoj L."/>
            <person name="Schutz K."/>
            <person name="Huang E."/>
            <person name="Spiegel L."/>
            <person name="Sekhon M."/>
            <person name="Murray J."/>
            <person name="Sheet P."/>
            <person name="Cordes M."/>
            <person name="Abu-Threideh J."/>
            <person name="Stoneking T."/>
            <person name="Kalicki J."/>
            <person name="Graves T."/>
            <person name="Harmon G."/>
            <person name="Edwards J."/>
            <person name="Latreille P."/>
            <person name="Courtney L."/>
            <person name="Cloud J."/>
            <person name="Abbott A."/>
            <person name="Scott K."/>
            <person name="Johnson D."/>
            <person name="Minx P."/>
            <person name="Bentley D."/>
            <person name="Fulton B."/>
            <person name="Miller N."/>
            <person name="Greco T."/>
            <person name="Kemp K."/>
            <person name="Kramer J."/>
            <person name="Fulton L."/>
            <person name="Mardis E."/>
            <person name="Dante M."/>
            <person name="Pepin K."/>
            <person name="Hillier L.W."/>
            <person name="Nelson J."/>
            <person name="Spieth J."/>
            <person name="Ryan E."/>
            <person name="Andrews S."/>
            <person name="Geisel C."/>
            <person name="Layman D."/>
            <person name="Du H."/>
            <person name="Ali J."/>
            <person name="Berghoff A."/>
            <person name="Jones K."/>
            <person name="Drone K."/>
            <person name="Cotton M."/>
            <person name="Joshu C."/>
            <person name="Antonoiu B."/>
            <person name="Zidanic M."/>
            <person name="Strong C."/>
            <person name="Sun H."/>
            <person name="Lamar B."/>
            <person name="Yordan C."/>
            <person name="Ma P."/>
            <person name="Zhong J."/>
            <person name="Preston R."/>
            <person name="Vil D."/>
            <person name="Shekher M."/>
            <person name="Matero A."/>
            <person name="Shah R."/>
            <person name="Swaby I.K."/>
            <person name="O'Shaughnessy A."/>
            <person name="Rodriguez M."/>
            <person name="Hoffman J."/>
            <person name="Till S."/>
            <person name="Granat S."/>
            <person name="Shohdy N."/>
            <person name="Hasegawa A."/>
            <person name="Hameed A."/>
            <person name="Lodhi M."/>
            <person name="Johnson A."/>
            <person name="Chen E."/>
            <person name="Marra M.A."/>
            <person name="Martienssen R."/>
            <person name="McCombie W.R."/>
        </authorList>
    </citation>
    <scope>NUCLEOTIDE SEQUENCE [LARGE SCALE GENOMIC DNA]</scope>
    <source>
        <strain>cv. Columbia</strain>
    </source>
</reference>
<reference key="4">
    <citation type="journal article" date="2017" name="Plant J.">
        <title>Araport11: a complete reannotation of the Arabidopsis thaliana reference genome.</title>
        <authorList>
            <person name="Cheng C.Y."/>
            <person name="Krishnakumar V."/>
            <person name="Chan A.P."/>
            <person name="Thibaud-Nissen F."/>
            <person name="Schobel S."/>
            <person name="Town C.D."/>
        </authorList>
    </citation>
    <scope>GENOME REANNOTATION</scope>
    <source>
        <strain>cv. Columbia</strain>
    </source>
</reference>
<gene>
    <name type="primary">TSF</name>
    <name type="ordered locus">At4g20370</name>
    <name type="ORF">F9F13.20</name>
</gene>
<dbReference type="EMBL" id="AF152907">
    <property type="protein sequence ID" value="AAF03937.1"/>
    <property type="molecule type" value="mRNA"/>
</dbReference>
<dbReference type="EMBL" id="AB027506">
    <property type="protein sequence ID" value="BAA77840.1"/>
    <property type="molecule type" value="mRNA"/>
</dbReference>
<dbReference type="EMBL" id="AL080253">
    <property type="protein sequence ID" value="CAB45803.1"/>
    <property type="molecule type" value="Genomic_DNA"/>
</dbReference>
<dbReference type="EMBL" id="AL161553">
    <property type="protein sequence ID" value="CAB79037.1"/>
    <property type="molecule type" value="Genomic_DNA"/>
</dbReference>
<dbReference type="EMBL" id="CP002687">
    <property type="protein sequence ID" value="AEE84314.1"/>
    <property type="molecule type" value="Genomic_DNA"/>
</dbReference>
<dbReference type="PIR" id="T52446">
    <property type="entry name" value="T52446"/>
</dbReference>
<dbReference type="RefSeq" id="NP_193770.1">
    <property type="nucleotide sequence ID" value="NM_118156.2"/>
</dbReference>
<dbReference type="SMR" id="Q9S7R5"/>
<dbReference type="BioGRID" id="13076">
    <property type="interactions" value="2"/>
</dbReference>
<dbReference type="FunCoup" id="Q9S7R5">
    <property type="interactions" value="922"/>
</dbReference>
<dbReference type="IntAct" id="Q9S7R5">
    <property type="interactions" value="2"/>
</dbReference>
<dbReference type="STRING" id="3702.Q9S7R5"/>
<dbReference type="PaxDb" id="3702-AT4G20370.1"/>
<dbReference type="ProteomicsDB" id="232351"/>
<dbReference type="EnsemblPlants" id="AT4G20370.1">
    <property type="protein sequence ID" value="AT4G20370.1"/>
    <property type="gene ID" value="AT4G20370"/>
</dbReference>
<dbReference type="GeneID" id="827785"/>
<dbReference type="Gramene" id="AT4G20370.1">
    <property type="protein sequence ID" value="AT4G20370.1"/>
    <property type="gene ID" value="AT4G20370"/>
</dbReference>
<dbReference type="KEGG" id="ath:AT4G20370"/>
<dbReference type="Araport" id="AT4G20370"/>
<dbReference type="TAIR" id="AT4G20370">
    <property type="gene designation" value="TSF"/>
</dbReference>
<dbReference type="eggNOG" id="KOG3346">
    <property type="taxonomic scope" value="Eukaryota"/>
</dbReference>
<dbReference type="HOGENOM" id="CLU_043994_6_1_1"/>
<dbReference type="InParanoid" id="Q9S7R5"/>
<dbReference type="OMA" id="QEVICYE"/>
<dbReference type="OrthoDB" id="2506647at2759"/>
<dbReference type="PhylomeDB" id="Q9S7R5"/>
<dbReference type="PRO" id="PR:Q9S7R5"/>
<dbReference type="Proteomes" id="UP000006548">
    <property type="component" value="Chromosome 4"/>
</dbReference>
<dbReference type="ExpressionAtlas" id="Q9S7R5">
    <property type="expression patterns" value="baseline and differential"/>
</dbReference>
<dbReference type="GO" id="GO:0005737">
    <property type="term" value="C:cytoplasm"/>
    <property type="evidence" value="ECO:0007669"/>
    <property type="project" value="UniProtKB-SubCell"/>
</dbReference>
<dbReference type="GO" id="GO:0010022">
    <property type="term" value="P:meristem determinacy"/>
    <property type="evidence" value="ECO:0000316"/>
    <property type="project" value="TAIR"/>
</dbReference>
<dbReference type="GO" id="GO:0009911">
    <property type="term" value="P:positive regulation of flower development"/>
    <property type="evidence" value="ECO:0000315"/>
    <property type="project" value="TAIR"/>
</dbReference>
<dbReference type="CDD" id="cd00866">
    <property type="entry name" value="PEBP_euk"/>
    <property type="match status" value="1"/>
</dbReference>
<dbReference type="FunFam" id="3.90.280.10:FF:000001">
    <property type="entry name" value="Terminal flower 1"/>
    <property type="match status" value="1"/>
</dbReference>
<dbReference type="Gene3D" id="3.90.280.10">
    <property type="entry name" value="PEBP-like"/>
    <property type="match status" value="1"/>
</dbReference>
<dbReference type="InterPro" id="IPR008914">
    <property type="entry name" value="PEBP"/>
</dbReference>
<dbReference type="InterPro" id="IPR036610">
    <property type="entry name" value="PEBP-like_sf"/>
</dbReference>
<dbReference type="InterPro" id="IPR035810">
    <property type="entry name" value="PEBP_euk"/>
</dbReference>
<dbReference type="InterPro" id="IPR001858">
    <property type="entry name" value="Phosphatidylethanolamine-bd_CS"/>
</dbReference>
<dbReference type="PANTHER" id="PTHR11362">
    <property type="entry name" value="PHOSPHATIDYLETHANOLAMINE-BINDING PROTEIN"/>
    <property type="match status" value="1"/>
</dbReference>
<dbReference type="PANTHER" id="PTHR11362:SF9">
    <property type="entry name" value="PROTEIN FLOWERING LOCUS T-RELATED"/>
    <property type="match status" value="1"/>
</dbReference>
<dbReference type="Pfam" id="PF01161">
    <property type="entry name" value="PBP"/>
    <property type="match status" value="1"/>
</dbReference>
<dbReference type="SUPFAM" id="SSF49777">
    <property type="entry name" value="PEBP-like"/>
    <property type="match status" value="1"/>
</dbReference>
<dbReference type="PROSITE" id="PS01220">
    <property type="entry name" value="PBP"/>
    <property type="match status" value="1"/>
</dbReference>